<feature type="signal peptide" evidence="5">
    <location>
        <begin position="1"/>
        <end position="22"/>
    </location>
</feature>
<feature type="chain" id="PRO_0000041425" description="Protein Wnt-4">
    <location>
        <begin position="23"/>
        <end position="351"/>
    </location>
</feature>
<feature type="lipid moiety-binding region" description="O-palmitoleoyl serine; by PORCN" evidence="4">
    <location>
        <position position="212"/>
    </location>
</feature>
<feature type="glycosylation site" description="N-linked (GlcNAc...) asparagine" evidence="5">
    <location>
        <position position="21"/>
    </location>
</feature>
<feature type="glycosylation site" description="N-linked (GlcNAc...) asparagine" evidence="5">
    <location>
        <position position="88"/>
    </location>
</feature>
<feature type="glycosylation site" description="N-linked (GlcNAc...) asparagine" evidence="5">
    <location>
        <position position="297"/>
    </location>
</feature>
<feature type="disulfide bond" evidence="3">
    <location>
        <begin position="78"/>
        <end position="89"/>
    </location>
</feature>
<feature type="disulfide bond" evidence="3">
    <location>
        <begin position="128"/>
        <end position="136"/>
    </location>
</feature>
<feature type="disulfide bond" evidence="3">
    <location>
        <begin position="138"/>
        <end position="155"/>
    </location>
</feature>
<feature type="disulfide bond" evidence="3">
    <location>
        <begin position="206"/>
        <end position="220"/>
    </location>
</feature>
<feature type="disulfide bond" evidence="3">
    <location>
        <begin position="208"/>
        <end position="215"/>
    </location>
</feature>
<feature type="disulfide bond" evidence="3">
    <location>
        <begin position="280"/>
        <end position="311"/>
    </location>
</feature>
<feature type="disulfide bond" evidence="3">
    <location>
        <begin position="296"/>
        <end position="306"/>
    </location>
</feature>
<feature type="disulfide bond" evidence="3">
    <location>
        <begin position="310"/>
        <end position="350"/>
    </location>
</feature>
<feature type="disulfide bond" evidence="3">
    <location>
        <begin position="326"/>
        <end position="341"/>
    </location>
</feature>
<feature type="disulfide bond" evidence="3">
    <location>
        <begin position="328"/>
        <end position="338"/>
    </location>
</feature>
<feature type="disulfide bond" evidence="3">
    <location>
        <begin position="333"/>
        <end position="334"/>
    </location>
</feature>
<keyword id="KW-0217">Developmental protein</keyword>
<keyword id="KW-1015">Disulfide bond</keyword>
<keyword id="KW-0272">Extracellular matrix</keyword>
<keyword id="KW-0325">Glycoprotein</keyword>
<keyword id="KW-0449">Lipoprotein</keyword>
<keyword id="KW-1185">Reference proteome</keyword>
<keyword id="KW-0964">Secreted</keyword>
<keyword id="KW-0732">Signal</keyword>
<keyword id="KW-0879">Wnt signaling pathway</keyword>
<organism>
    <name type="scientific">Gallus gallus</name>
    <name type="common">Chicken</name>
    <dbReference type="NCBI Taxonomy" id="9031"/>
    <lineage>
        <taxon>Eukaryota</taxon>
        <taxon>Metazoa</taxon>
        <taxon>Chordata</taxon>
        <taxon>Craniata</taxon>
        <taxon>Vertebrata</taxon>
        <taxon>Euteleostomi</taxon>
        <taxon>Archelosauria</taxon>
        <taxon>Archosauria</taxon>
        <taxon>Dinosauria</taxon>
        <taxon>Saurischia</taxon>
        <taxon>Theropoda</taxon>
        <taxon>Coelurosauria</taxon>
        <taxon>Aves</taxon>
        <taxon>Neognathae</taxon>
        <taxon>Galloanserae</taxon>
        <taxon>Galliformes</taxon>
        <taxon>Phasianidae</taxon>
        <taxon>Phasianinae</taxon>
        <taxon>Gallus</taxon>
    </lineage>
</organism>
<reference key="1">
    <citation type="journal article" date="1994" name="Biochem. Biophys. Res. Commun.">
        <title>Regional expression of the Cwnt-4 gene in developing chick central nervous system in relationship to the diencephalic neuromere D2 and a dorsal domain of the spinal cord.</title>
        <authorList>
            <person name="Yoshioka H."/>
            <person name="Ohuchi H."/>
            <person name="Nohno T."/>
            <person name="Fujiwara A."/>
            <person name="Tanda N."/>
            <person name="Kawakami Y."/>
            <person name="Noji S."/>
        </authorList>
    </citation>
    <scope>NUCLEOTIDE SEQUENCE [MRNA]</scope>
    <source>
        <tissue>Embryo</tissue>
    </source>
</reference>
<reference key="2">
    <citation type="journal article" date="1995" name="DNA Seq.">
        <title>Cloning and characterization of Wnt-4 and Wnt-11 cDNAs from chick embryo.</title>
        <authorList>
            <person name="Tanda N."/>
            <person name="Kawakami Y."/>
            <person name="Saito T."/>
            <person name="Noji S."/>
            <person name="Nohno T."/>
        </authorList>
    </citation>
    <scope>NUCLEOTIDE SEQUENCE [MRNA]</scope>
</reference>
<reference key="3">
    <citation type="journal article" date="2003" name="Development">
        <title>Carboxypeptidase Z (CPZ) modulates Wnt signaling and regulates the development of skeletal elements in the chicken.</title>
        <authorList>
            <person name="Moeller C."/>
            <person name="Swindell E.C."/>
            <person name="Kispert A."/>
            <person name="Eichele G."/>
        </authorList>
    </citation>
    <scope>INTERACTION WITH CPZ</scope>
</reference>
<comment type="function">
    <text evidence="1 7">Ligand for members of the frizzled family of seven transmembrane receptors (Probable). Plays an important role in embryonic development (By similarity).</text>
</comment>
<comment type="subunit">
    <text evidence="6">Interacts with CPZ.</text>
</comment>
<comment type="subcellular location">
    <subcellularLocation>
        <location>Secreted</location>
        <location>Extracellular space</location>
        <location>Extracellular matrix</location>
    </subcellularLocation>
</comment>
<comment type="tissue specificity">
    <text>Predominantly expressed in the diencephalon neuromere D2.</text>
</comment>
<comment type="PTM">
    <text evidence="2 4">Palmitoleoylation is required for efficient binding to frizzled receptors. Depalmitoleoylation leads to Wnt signaling pathway inhibition.</text>
</comment>
<comment type="similarity">
    <text evidence="7">Belongs to the Wnt family.</text>
</comment>
<dbReference type="EMBL" id="D31900">
    <property type="protein sequence ID" value="BAA06698.1"/>
    <property type="molecule type" value="mRNA"/>
</dbReference>
<dbReference type="PIR" id="JC2451">
    <property type="entry name" value="JC2451"/>
</dbReference>
<dbReference type="RefSeq" id="NP_990114.1">
    <property type="nucleotide sequence ID" value="NM_204783.2"/>
</dbReference>
<dbReference type="SMR" id="P49337"/>
<dbReference type="FunCoup" id="P49337">
    <property type="interactions" value="89"/>
</dbReference>
<dbReference type="STRING" id="9031.ENSGALP00000046583"/>
<dbReference type="GlyCosmos" id="P49337">
    <property type="glycosylation" value="3 sites, No reported glycans"/>
</dbReference>
<dbReference type="GlyGen" id="P49337">
    <property type="glycosylation" value="4 sites"/>
</dbReference>
<dbReference type="PaxDb" id="9031-ENSGALP00000007633"/>
<dbReference type="Ensembl" id="ENSGALT00010040945.1">
    <property type="protein sequence ID" value="ENSGALP00010023909.1"/>
    <property type="gene ID" value="ENSGALG00010016957.1"/>
</dbReference>
<dbReference type="GeneID" id="395561"/>
<dbReference type="KEGG" id="gga:395561"/>
<dbReference type="CTD" id="54361"/>
<dbReference type="VEuPathDB" id="HostDB:geneid_395561"/>
<dbReference type="eggNOG" id="KOG3913">
    <property type="taxonomic scope" value="Eukaryota"/>
</dbReference>
<dbReference type="GeneTree" id="ENSGT00940000159654"/>
<dbReference type="HOGENOM" id="CLU_033039_1_4_1"/>
<dbReference type="InParanoid" id="P49337"/>
<dbReference type="OMA" id="NFEWSGC"/>
<dbReference type="OrthoDB" id="5945655at2759"/>
<dbReference type="PhylomeDB" id="P49337"/>
<dbReference type="TreeFam" id="TF105310"/>
<dbReference type="Reactome" id="R-GGA-3238698">
    <property type="pathway name" value="WNT ligand biogenesis and trafficking"/>
</dbReference>
<dbReference type="PRO" id="PR:P49337"/>
<dbReference type="Proteomes" id="UP000000539">
    <property type="component" value="Chromosome 21"/>
</dbReference>
<dbReference type="Bgee" id="ENSGALG00000041708">
    <property type="expression patterns" value="Expressed in liver and 8 other cell types or tissues"/>
</dbReference>
<dbReference type="GO" id="GO:0005737">
    <property type="term" value="C:cytoplasm"/>
    <property type="evidence" value="ECO:0000250"/>
    <property type="project" value="UniProtKB"/>
</dbReference>
<dbReference type="GO" id="GO:0005615">
    <property type="term" value="C:extracellular space"/>
    <property type="evidence" value="ECO:0000250"/>
    <property type="project" value="UniProtKB"/>
</dbReference>
<dbReference type="GO" id="GO:0005125">
    <property type="term" value="F:cytokine activity"/>
    <property type="evidence" value="ECO:0000318"/>
    <property type="project" value="GO_Central"/>
</dbReference>
<dbReference type="GO" id="GO:0005109">
    <property type="term" value="F:frizzled binding"/>
    <property type="evidence" value="ECO:0000318"/>
    <property type="project" value="GO_Central"/>
</dbReference>
<dbReference type="GO" id="GO:0060070">
    <property type="term" value="P:canonical Wnt signaling pathway"/>
    <property type="evidence" value="ECO:0000250"/>
    <property type="project" value="UniProtKB"/>
</dbReference>
<dbReference type="GO" id="GO:0045165">
    <property type="term" value="P:cell fate commitment"/>
    <property type="evidence" value="ECO:0000318"/>
    <property type="project" value="GO_Central"/>
</dbReference>
<dbReference type="GO" id="GO:0060993">
    <property type="term" value="P:kidney morphogenesis"/>
    <property type="evidence" value="ECO:0000303"/>
    <property type="project" value="AgBase"/>
</dbReference>
<dbReference type="GO" id="GO:2000180">
    <property type="term" value="P:negative regulation of androgen biosynthetic process"/>
    <property type="evidence" value="ECO:0000250"/>
    <property type="project" value="UniProtKB"/>
</dbReference>
<dbReference type="GO" id="GO:0030182">
    <property type="term" value="P:neuron differentiation"/>
    <property type="evidence" value="ECO:0000318"/>
    <property type="project" value="GO_Central"/>
</dbReference>
<dbReference type="GO" id="GO:0061036">
    <property type="term" value="P:positive regulation of cartilage development"/>
    <property type="evidence" value="ECO:0000304"/>
    <property type="project" value="AgBase"/>
</dbReference>
<dbReference type="GO" id="GO:0014858">
    <property type="term" value="P:positive regulation of skeletal muscle cell proliferation"/>
    <property type="evidence" value="ECO:0000315"/>
    <property type="project" value="AgBase"/>
</dbReference>
<dbReference type="GO" id="GO:1902811">
    <property type="term" value="P:positive regulation of skeletal muscle fiber differentiation"/>
    <property type="evidence" value="ECO:0000315"/>
    <property type="project" value="AgBase"/>
</dbReference>
<dbReference type="CDD" id="cd19336">
    <property type="entry name" value="Wnt_Wnt4"/>
    <property type="match status" value="1"/>
</dbReference>
<dbReference type="FunFam" id="3.30.2460.20:FF:000008">
    <property type="entry name" value="Protein Wnt-4"/>
    <property type="match status" value="1"/>
</dbReference>
<dbReference type="Gene3D" id="3.30.2460.20">
    <property type="match status" value="1"/>
</dbReference>
<dbReference type="InterPro" id="IPR005817">
    <property type="entry name" value="Wnt"/>
</dbReference>
<dbReference type="InterPro" id="IPR009142">
    <property type="entry name" value="Wnt4"/>
</dbReference>
<dbReference type="InterPro" id="IPR043158">
    <property type="entry name" value="Wnt_C"/>
</dbReference>
<dbReference type="InterPro" id="IPR018161">
    <property type="entry name" value="Wnt_CS"/>
</dbReference>
<dbReference type="PANTHER" id="PTHR12027:SF101">
    <property type="entry name" value="PROTEIN WNT-4"/>
    <property type="match status" value="1"/>
</dbReference>
<dbReference type="PANTHER" id="PTHR12027">
    <property type="entry name" value="WNT RELATED"/>
    <property type="match status" value="1"/>
</dbReference>
<dbReference type="Pfam" id="PF00110">
    <property type="entry name" value="wnt"/>
    <property type="match status" value="1"/>
</dbReference>
<dbReference type="PRINTS" id="PR01844">
    <property type="entry name" value="WNT4PROTEIN"/>
</dbReference>
<dbReference type="PRINTS" id="PR01349">
    <property type="entry name" value="WNTPROTEIN"/>
</dbReference>
<dbReference type="SMART" id="SM00097">
    <property type="entry name" value="WNT1"/>
    <property type="match status" value="1"/>
</dbReference>
<dbReference type="PROSITE" id="PS00246">
    <property type="entry name" value="WNT1"/>
    <property type="match status" value="1"/>
</dbReference>
<sequence length="351" mass="38963">MSPEYFLRSLLLIILATFSANASNWLYLAKLSSVGSISEEETCEKLKGLIQRQVQMCKRNLEVMDSVRRGAQLAIEECQYQFRNRRWNCSTLDTLPVFGKVVTQGTREAAFVYAISSAGVAFAVTRACSSGELDKCGCDRTVQGGSPQGFQWSGCSDNIAYGVAFSQSFVDVRERSKGASSNRALMNLHNNEAGRKAILNNMRVECKCHGVSGSCEFKTCWKAMPPFRKVGNVLKEKFDGATEVEQSEIGSTKVLVPKNSQFKPHTDEDLVYLDSSPDFCDHDLKNGVLGTSGRQCNKTSKAIDGCELMCCGRGFHTDEVEVVERCSCKFHWCCSVKCKPCHRVVEIHTCR</sequence>
<protein>
    <recommendedName>
        <fullName>Protein Wnt-4</fullName>
    </recommendedName>
</protein>
<accession>P49337</accession>
<name>WNT4_CHICK</name>
<gene>
    <name type="primary">WNT4</name>
    <name type="synonym">WNT-4</name>
</gene>
<evidence type="ECO:0000250" key="1">
    <source>
        <dbReference type="UniProtKB" id="P22724"/>
    </source>
</evidence>
<evidence type="ECO:0000250" key="2">
    <source>
        <dbReference type="UniProtKB" id="P27467"/>
    </source>
</evidence>
<evidence type="ECO:0000250" key="3">
    <source>
        <dbReference type="UniProtKB" id="P28026"/>
    </source>
</evidence>
<evidence type="ECO:0000250" key="4">
    <source>
        <dbReference type="UniProtKB" id="P56704"/>
    </source>
</evidence>
<evidence type="ECO:0000255" key="5"/>
<evidence type="ECO:0000269" key="6">
    <source>
    </source>
</evidence>
<evidence type="ECO:0000305" key="7"/>
<proteinExistence type="evidence at protein level"/>